<proteinExistence type="evidence at protein level"/>
<reference key="1">
    <citation type="journal article" date="2008" name="Mar. Biotechnol.">
        <title>Distribution and function of the nacrein-related proteins inferred from structural analysis.</title>
        <authorList>
            <person name="Norizuki M."/>
            <person name="Samata T."/>
        </authorList>
    </citation>
    <scope>NUCLEOTIDE SEQUENCE [MRNA]</scope>
    <scope>FUNCTION</scope>
    <scope>CRYSTALLIZATION</scope>
    <source>
        <tissue>Gill</tissue>
        <tissue>Mantle</tissue>
    </source>
</reference>
<name>MAP2_MIZYE</name>
<sequence>ASMFKHDHYMDNGVRYPNGDGICEQLNETKCDAGFSYDRSICEGPHYWHTISKCFIACGIGQRQSPINIVSYDAKFRQRLPKLKFKPHMEKLKTEVTNHQNRAPEFEPEDGENLYVKLNNLVDGHYKFHNLHVHNGRTRRKGSEHSVNGRFTPMEAHLVFHHDDQTHFEPTRTKLGGAFPGHNDFVVVGVFLEVGDDGFGDEPDDEECKRILKGHHPDNNENGNGDNGNNGYNGDNGNNGDNGNNGYNGDNGNNGVNGNNGYNGDNGNNGDNGNNGYNGDNGNNGDNGNNGENGNNGENGNNGENGHKHGCRVKKAKHLSTILECAYRNDKVREFKKVGEEEGLDVHLTPEMPLPPLKNRHYYTYEGSLTTPPCTESVLWVVQKCHVQVSRRVLHALRNVEGYKDGTTLRKYGTRRPTQKNKVTVYKSFK</sequence>
<organism>
    <name type="scientific">Mizuhopecten yessoensis</name>
    <name type="common">Japanese scallop</name>
    <name type="synonym">Patinopecten yessoensis</name>
    <dbReference type="NCBI Taxonomy" id="6573"/>
    <lineage>
        <taxon>Eukaryota</taxon>
        <taxon>Metazoa</taxon>
        <taxon>Spiralia</taxon>
        <taxon>Lophotrochozoa</taxon>
        <taxon>Mollusca</taxon>
        <taxon>Bivalvia</taxon>
        <taxon>Autobranchia</taxon>
        <taxon>Pteriomorphia</taxon>
        <taxon>Pectinida</taxon>
        <taxon>Pectinoidea</taxon>
        <taxon>Pectinidae</taxon>
        <taxon>Mizuhopecten</taxon>
    </lineage>
</organism>
<evidence type="ECO:0000250" key="1"/>
<evidence type="ECO:0000255" key="2"/>
<evidence type="ECO:0000255" key="3">
    <source>
        <dbReference type="PROSITE-ProRule" id="PRU01134"/>
    </source>
</evidence>
<evidence type="ECO:0000256" key="4">
    <source>
        <dbReference type="SAM" id="MobiDB-lite"/>
    </source>
</evidence>
<evidence type="ECO:0000269" key="5">
    <source>
    </source>
</evidence>
<evidence type="ECO:0000305" key="6"/>
<protein>
    <recommendedName>
        <fullName>Nacrein-like protein P2</fullName>
        <ecNumber>4.2.1.1</ecNumber>
    </recommendedName>
</protein>
<feature type="chain" id="PRO_0000379794" description="Nacrein-like protein P2">
    <location>
        <begin position="1"/>
        <end position="430"/>
    </location>
</feature>
<feature type="domain" description="Alpha-carbonic anhydrase" evidence="3">
    <location>
        <begin position="33"/>
        <end position="429"/>
    </location>
</feature>
<feature type="repeat" description="1">
    <location>
        <begin position="225"/>
        <end position="227"/>
    </location>
</feature>
<feature type="repeat" description="2">
    <location>
        <begin position="228"/>
        <end position="230"/>
    </location>
</feature>
<feature type="repeat" description="3">
    <location>
        <begin position="231"/>
        <end position="233"/>
    </location>
</feature>
<feature type="repeat" description="4">
    <location>
        <begin position="234"/>
        <end position="236"/>
    </location>
</feature>
<feature type="repeat" description="5">
    <location>
        <begin position="237"/>
        <end position="239"/>
    </location>
</feature>
<feature type="repeat" description="6">
    <location>
        <begin position="240"/>
        <end position="242"/>
    </location>
</feature>
<feature type="repeat" description="7">
    <location>
        <begin position="243"/>
        <end position="245"/>
    </location>
</feature>
<feature type="repeat" description="8">
    <location>
        <begin position="246"/>
        <end position="248"/>
    </location>
</feature>
<feature type="repeat" description="9">
    <location>
        <begin position="249"/>
        <end position="251"/>
    </location>
</feature>
<feature type="repeat" description="10">
    <location>
        <begin position="252"/>
        <end position="254"/>
    </location>
</feature>
<feature type="repeat" description="11">
    <location>
        <begin position="255"/>
        <end position="257"/>
    </location>
</feature>
<feature type="repeat" description="12">
    <location>
        <begin position="258"/>
        <end position="260"/>
    </location>
</feature>
<feature type="repeat" description="13">
    <location>
        <begin position="261"/>
        <end position="263"/>
    </location>
</feature>
<feature type="repeat" description="14">
    <location>
        <begin position="264"/>
        <end position="266"/>
    </location>
</feature>
<feature type="repeat" description="15">
    <location>
        <begin position="267"/>
        <end position="269"/>
    </location>
</feature>
<feature type="repeat" description="16">
    <location>
        <begin position="270"/>
        <end position="272"/>
    </location>
</feature>
<feature type="repeat" description="17">
    <location>
        <begin position="273"/>
        <end position="275"/>
    </location>
</feature>
<feature type="repeat" description="18">
    <location>
        <begin position="276"/>
        <end position="278"/>
    </location>
</feature>
<feature type="repeat" description="19">
    <location>
        <begin position="279"/>
        <end position="281"/>
    </location>
</feature>
<feature type="repeat" description="20">
    <location>
        <begin position="282"/>
        <end position="284"/>
    </location>
</feature>
<feature type="repeat" description="21">
    <location>
        <begin position="285"/>
        <end position="287"/>
    </location>
</feature>
<feature type="repeat" description="22">
    <location>
        <begin position="288"/>
        <end position="290"/>
    </location>
</feature>
<feature type="repeat" description="23">
    <location>
        <begin position="291"/>
        <end position="293"/>
    </location>
</feature>
<feature type="repeat" description="24">
    <location>
        <begin position="294"/>
        <end position="296"/>
    </location>
</feature>
<feature type="repeat" description="25">
    <location>
        <begin position="297"/>
        <end position="299"/>
    </location>
</feature>
<feature type="repeat" description="26">
    <location>
        <begin position="300"/>
        <end position="301"/>
    </location>
</feature>
<feature type="repeat" description="27">
    <location>
        <begin position="303"/>
        <end position="305"/>
    </location>
</feature>
<feature type="region of interest" description="Disordered" evidence="4">
    <location>
        <begin position="201"/>
        <end position="312"/>
    </location>
</feature>
<feature type="region of interest" description="27 X 3 AA approximate tandem repeats of G-X-N">
    <location>
        <begin position="225"/>
        <end position="305"/>
    </location>
</feature>
<feature type="compositionally biased region" description="Basic and acidic residues" evidence="4">
    <location>
        <begin position="207"/>
        <end position="219"/>
    </location>
</feature>
<feature type="compositionally biased region" description="Low complexity" evidence="4">
    <location>
        <begin position="220"/>
        <end position="304"/>
    </location>
</feature>
<feature type="binding site" evidence="3">
    <location>
        <position position="132"/>
    </location>
    <ligand>
        <name>Zn(2+)</name>
        <dbReference type="ChEBI" id="CHEBI:29105"/>
        <note>catalytic</note>
    </ligand>
</feature>
<feature type="binding site" evidence="3">
    <location>
        <position position="134"/>
    </location>
    <ligand>
        <name>Zn(2+)</name>
        <dbReference type="ChEBI" id="CHEBI:29105"/>
        <note>catalytic</note>
    </ligand>
</feature>
<feature type="binding site" evidence="3">
    <location>
        <position position="157"/>
    </location>
    <ligand>
        <name>Zn(2+)</name>
        <dbReference type="ChEBI" id="CHEBI:29105"/>
        <note>catalytic</note>
    </ligand>
</feature>
<feature type="binding site" evidence="1">
    <location>
        <begin position="370"/>
        <end position="371"/>
    </location>
    <ligand>
        <name>substrate</name>
    </ligand>
</feature>
<feature type="glycosylation site" description="N-linked (GlcNAc...) asparagine" evidence="2">
    <location>
        <position position="27"/>
    </location>
</feature>
<keyword id="KW-0106">Calcium</keyword>
<keyword id="KW-1015">Disulfide bond</keyword>
<keyword id="KW-0272">Extracellular matrix</keyword>
<keyword id="KW-0325">Glycoprotein</keyword>
<keyword id="KW-0456">Lyase</keyword>
<keyword id="KW-0479">Metal-binding</keyword>
<keyword id="KW-0677">Repeat</keyword>
<keyword id="KW-0964">Secreted</keyword>
<keyword id="KW-0862">Zinc</keyword>
<dbReference type="EC" id="4.2.1.1"/>
<dbReference type="EMBL" id="AB252482">
    <property type="protein sequence ID" value="BAF42332.1"/>
    <property type="molecule type" value="mRNA"/>
</dbReference>
<dbReference type="SMR" id="A0ZSF5"/>
<dbReference type="GO" id="GO:0005737">
    <property type="term" value="C:cytoplasm"/>
    <property type="evidence" value="ECO:0007669"/>
    <property type="project" value="TreeGrafter"/>
</dbReference>
<dbReference type="GO" id="GO:0005576">
    <property type="term" value="C:extracellular region"/>
    <property type="evidence" value="ECO:0007669"/>
    <property type="project" value="UniProtKB-KW"/>
</dbReference>
<dbReference type="GO" id="GO:0004089">
    <property type="term" value="F:carbonate dehydratase activity"/>
    <property type="evidence" value="ECO:0007669"/>
    <property type="project" value="UniProtKB-EC"/>
</dbReference>
<dbReference type="GO" id="GO:0008270">
    <property type="term" value="F:zinc ion binding"/>
    <property type="evidence" value="ECO:0007669"/>
    <property type="project" value="InterPro"/>
</dbReference>
<dbReference type="CDD" id="cd03124">
    <property type="entry name" value="alpha_CA_prokaryotic_like"/>
    <property type="match status" value="1"/>
</dbReference>
<dbReference type="Gene3D" id="3.10.200.10">
    <property type="entry name" value="Alpha carbonic anhydrase"/>
    <property type="match status" value="2"/>
</dbReference>
<dbReference type="InterPro" id="IPR041891">
    <property type="entry name" value="Alpha_CA_prokaryot-like"/>
</dbReference>
<dbReference type="InterPro" id="IPR001148">
    <property type="entry name" value="CA_dom"/>
</dbReference>
<dbReference type="InterPro" id="IPR036398">
    <property type="entry name" value="CA_dom_sf"/>
</dbReference>
<dbReference type="InterPro" id="IPR023561">
    <property type="entry name" value="Carbonic_anhydrase_a-class"/>
</dbReference>
<dbReference type="InterPro" id="IPR008160">
    <property type="entry name" value="Collagen"/>
</dbReference>
<dbReference type="PANTHER" id="PTHR18952">
    <property type="entry name" value="CARBONIC ANHYDRASE"/>
    <property type="match status" value="1"/>
</dbReference>
<dbReference type="PANTHER" id="PTHR18952:SF141">
    <property type="entry name" value="CARBONIC ANHYDRASE"/>
    <property type="match status" value="1"/>
</dbReference>
<dbReference type="Pfam" id="PF00194">
    <property type="entry name" value="Carb_anhydrase"/>
    <property type="match status" value="2"/>
</dbReference>
<dbReference type="Pfam" id="PF01391">
    <property type="entry name" value="Collagen"/>
    <property type="match status" value="2"/>
</dbReference>
<dbReference type="SMART" id="SM01057">
    <property type="entry name" value="Carb_anhydrase"/>
    <property type="match status" value="1"/>
</dbReference>
<dbReference type="SUPFAM" id="SSF51069">
    <property type="entry name" value="Carbonic anhydrase"/>
    <property type="match status" value="1"/>
</dbReference>
<dbReference type="PROSITE" id="PS51144">
    <property type="entry name" value="ALPHA_CA_2"/>
    <property type="match status" value="1"/>
</dbReference>
<comment type="function">
    <text evidence="1 5">Acts as a negative regulator for calcification in the shells of mollusks. May function both as a calcium concentrator and as a carbonic anhydrase required for production of carbonate ions, which are assembled to CaCO(3) at mineralization sites. Is important for shell formation in both the calcitic prismatic layer and the aragonitic nacreous layer (By similarity). Shows inhibitory activity of crystal formation when present in free state but, when attached to the insoluble matrix, may regulate the form and size of aragonite crystal.</text>
</comment>
<comment type="catalytic activity">
    <reaction>
        <text>hydrogencarbonate + H(+) = CO2 + H2O</text>
        <dbReference type="Rhea" id="RHEA:10748"/>
        <dbReference type="ChEBI" id="CHEBI:15377"/>
        <dbReference type="ChEBI" id="CHEBI:15378"/>
        <dbReference type="ChEBI" id="CHEBI:16526"/>
        <dbReference type="ChEBI" id="CHEBI:17544"/>
        <dbReference type="EC" id="4.2.1.1"/>
    </reaction>
</comment>
<comment type="cofactor">
    <cofactor evidence="1">
        <name>Zn(2+)</name>
        <dbReference type="ChEBI" id="CHEBI:29105"/>
    </cofactor>
</comment>
<comment type="subunit">
    <text evidence="1">Homooligomer; disulfide-linked. May also be disulfide-linked to insoluble organic matrix (By similarity).</text>
</comment>
<comment type="subcellular location">
    <subcellularLocation>
        <location evidence="1">Secreted</location>
        <location evidence="1">Extracellular space</location>
        <location evidence="1">Extracellular matrix</location>
    </subcellularLocation>
</comment>
<comment type="tissue specificity">
    <text>Expressed in the mantle.</text>
</comment>
<comment type="miscellaneous">
    <text>Two hypotheses for calcium binding are proposed. Either the Gly-Xaa-Asn repeat domain bind calcium or sulfite and sialic acid provide the necessary negative charge in the N-glycan to promote calcium uptake.</text>
</comment>
<comment type="similarity">
    <text evidence="6">Belongs to the alpha-carbonic anhydrase family.</text>
</comment>
<accession>A0ZSF5</accession>